<proteinExistence type="inferred from homology"/>
<protein>
    <recommendedName>
        <fullName evidence="1">UvrABC system protein C</fullName>
        <shortName evidence="1">Protein UvrC</shortName>
    </recommendedName>
    <alternativeName>
        <fullName evidence="1">Excinuclease ABC subunit C</fullName>
    </alternativeName>
</protein>
<accession>Q1RIW9</accession>
<reference key="1">
    <citation type="journal article" date="2006" name="PLoS Genet.">
        <title>Genome sequence of Rickettsia bellii illuminates the role of amoebae in gene exchanges between intracellular pathogens.</title>
        <authorList>
            <person name="Ogata H."/>
            <person name="La Scola B."/>
            <person name="Audic S."/>
            <person name="Renesto P."/>
            <person name="Blanc G."/>
            <person name="Robert C."/>
            <person name="Fournier P.-E."/>
            <person name="Claverie J.-M."/>
            <person name="Raoult D."/>
        </authorList>
    </citation>
    <scope>NUCLEOTIDE SEQUENCE [LARGE SCALE GENOMIC DNA]</scope>
    <source>
        <strain>RML369-C</strain>
    </source>
</reference>
<keyword id="KW-0963">Cytoplasm</keyword>
<keyword id="KW-0227">DNA damage</keyword>
<keyword id="KW-0228">DNA excision</keyword>
<keyword id="KW-0234">DNA repair</keyword>
<keyword id="KW-0267">Excision nuclease</keyword>
<keyword id="KW-0742">SOS response</keyword>
<comment type="function">
    <text evidence="1">The UvrABC repair system catalyzes the recognition and processing of DNA lesions. UvrC both incises the 5' and 3' sides of the lesion. The N-terminal half is responsible for the 3' incision and the C-terminal half is responsible for the 5' incision.</text>
</comment>
<comment type="subunit">
    <text evidence="1">Interacts with UvrB in an incision complex.</text>
</comment>
<comment type="subcellular location">
    <subcellularLocation>
        <location evidence="1">Cytoplasm</location>
    </subcellularLocation>
</comment>
<comment type="similarity">
    <text evidence="1">Belongs to the UvrC family.</text>
</comment>
<gene>
    <name evidence="1" type="primary">uvrC</name>
    <name type="ordered locus">RBE_0614</name>
</gene>
<name>UVRC_RICBR</name>
<sequence length="635" mass="72695">MTMELTGNELIKSKLIDIPERSGVYRMFDANKQVIYVGKAKNLKKRLTNYIKTDLDTKTLRMVANTCSLEYSITNSEVEALLLEAQLIKKFQPKFNILLKDDKSFPFIKLRLDHDFPQLLKYRGRALNDGKFFGPFASATEVNTTLSELQKIFKLRSCTDNYFNSRTRPCLQYEIKRCYAPCVGKINKKDYAELVGQVKDFLQGRSKELQENLSKKMEELSEQMRFEEAAEIRDRIKALSYVQLKAGITDIVKDADIIAIVEKNGHYCVEVFLYRIGQACGNIPYFPTSTENSTKEEVLKHFLLQFYQKQQVPPGIIINHEIDDKDNIIEAIRNINDFAKLSITIPASGGKLKLVQNAQENALFSLEQYLKKFAKNQELMFEVKELFNLPEIPERIEVYDNSHIQGKFAVGVMIVAGKSGFDKKEYRVFSLSSRDSITGSSKSTNNDSISCFLDTVDKPRYDTKGDDYEMLRQVLTRRLTRLKQEPHRLPSLMIIDGGKGHLGIVKEVMNKLQMDIPFVCMSKGPDRNAGLEQFHMVGREVFTLNKNLPLMKYLQILRDEAHNFAIKNHRLSRSRAIKVSSLDEIEGIGDTRKKALLHYFGSYKAVSDATLDELSKVKGISKSLAKMIFNALHKN</sequence>
<organism>
    <name type="scientific">Rickettsia bellii (strain RML369-C)</name>
    <dbReference type="NCBI Taxonomy" id="336407"/>
    <lineage>
        <taxon>Bacteria</taxon>
        <taxon>Pseudomonadati</taxon>
        <taxon>Pseudomonadota</taxon>
        <taxon>Alphaproteobacteria</taxon>
        <taxon>Rickettsiales</taxon>
        <taxon>Rickettsiaceae</taxon>
        <taxon>Rickettsieae</taxon>
        <taxon>Rickettsia</taxon>
        <taxon>belli group</taxon>
    </lineage>
</organism>
<dbReference type="EMBL" id="CP000087">
    <property type="protein sequence ID" value="ABE04695.1"/>
    <property type="molecule type" value="Genomic_DNA"/>
</dbReference>
<dbReference type="RefSeq" id="WP_011477283.1">
    <property type="nucleotide sequence ID" value="NC_007940.1"/>
</dbReference>
<dbReference type="SMR" id="Q1RIW9"/>
<dbReference type="KEGG" id="rbe:RBE_0614"/>
<dbReference type="eggNOG" id="COG0322">
    <property type="taxonomic scope" value="Bacteria"/>
</dbReference>
<dbReference type="HOGENOM" id="CLU_014841_3_2_5"/>
<dbReference type="OrthoDB" id="9804933at2"/>
<dbReference type="Proteomes" id="UP000001951">
    <property type="component" value="Chromosome"/>
</dbReference>
<dbReference type="GO" id="GO:0005737">
    <property type="term" value="C:cytoplasm"/>
    <property type="evidence" value="ECO:0007669"/>
    <property type="project" value="UniProtKB-SubCell"/>
</dbReference>
<dbReference type="GO" id="GO:0009380">
    <property type="term" value="C:excinuclease repair complex"/>
    <property type="evidence" value="ECO:0007669"/>
    <property type="project" value="InterPro"/>
</dbReference>
<dbReference type="GO" id="GO:0003677">
    <property type="term" value="F:DNA binding"/>
    <property type="evidence" value="ECO:0007669"/>
    <property type="project" value="UniProtKB-UniRule"/>
</dbReference>
<dbReference type="GO" id="GO:0009381">
    <property type="term" value="F:excinuclease ABC activity"/>
    <property type="evidence" value="ECO:0007669"/>
    <property type="project" value="UniProtKB-UniRule"/>
</dbReference>
<dbReference type="GO" id="GO:0006289">
    <property type="term" value="P:nucleotide-excision repair"/>
    <property type="evidence" value="ECO:0007669"/>
    <property type="project" value="UniProtKB-UniRule"/>
</dbReference>
<dbReference type="GO" id="GO:0009432">
    <property type="term" value="P:SOS response"/>
    <property type="evidence" value="ECO:0007669"/>
    <property type="project" value="UniProtKB-UniRule"/>
</dbReference>
<dbReference type="CDD" id="cd10434">
    <property type="entry name" value="GIY-YIG_UvrC_Cho"/>
    <property type="match status" value="1"/>
</dbReference>
<dbReference type="FunFam" id="3.40.1440.10:FF:000001">
    <property type="entry name" value="UvrABC system protein C"/>
    <property type="match status" value="1"/>
</dbReference>
<dbReference type="Gene3D" id="1.10.150.20">
    <property type="entry name" value="5' to 3' exonuclease, C-terminal subdomain"/>
    <property type="match status" value="1"/>
</dbReference>
<dbReference type="Gene3D" id="3.40.1440.10">
    <property type="entry name" value="GIY-YIG endonuclease"/>
    <property type="match status" value="1"/>
</dbReference>
<dbReference type="Gene3D" id="4.10.860.10">
    <property type="entry name" value="UVR domain"/>
    <property type="match status" value="1"/>
</dbReference>
<dbReference type="Gene3D" id="3.30.420.340">
    <property type="entry name" value="UvrC, RNAse H endonuclease domain"/>
    <property type="match status" value="1"/>
</dbReference>
<dbReference type="HAMAP" id="MF_00203">
    <property type="entry name" value="UvrC"/>
    <property type="match status" value="1"/>
</dbReference>
<dbReference type="InterPro" id="IPR000305">
    <property type="entry name" value="GIY-YIG_endonuc"/>
</dbReference>
<dbReference type="InterPro" id="IPR035901">
    <property type="entry name" value="GIY-YIG_endonuc_sf"/>
</dbReference>
<dbReference type="InterPro" id="IPR047296">
    <property type="entry name" value="GIY-YIG_UvrC_Cho"/>
</dbReference>
<dbReference type="InterPro" id="IPR003583">
    <property type="entry name" value="Hlx-hairpin-Hlx_DNA-bd_motif"/>
</dbReference>
<dbReference type="InterPro" id="IPR022439">
    <property type="entry name" value="RPE4"/>
</dbReference>
<dbReference type="InterPro" id="IPR010994">
    <property type="entry name" value="RuvA_2-like"/>
</dbReference>
<dbReference type="InterPro" id="IPR001943">
    <property type="entry name" value="UVR_dom"/>
</dbReference>
<dbReference type="InterPro" id="IPR036876">
    <property type="entry name" value="UVR_dom_sf"/>
</dbReference>
<dbReference type="InterPro" id="IPR050066">
    <property type="entry name" value="UvrABC_protein_C"/>
</dbReference>
<dbReference type="InterPro" id="IPR004791">
    <property type="entry name" value="UvrC"/>
</dbReference>
<dbReference type="InterPro" id="IPR001162">
    <property type="entry name" value="UvrC_RNase_H_dom"/>
</dbReference>
<dbReference type="InterPro" id="IPR038476">
    <property type="entry name" value="UvrC_RNase_H_dom_sf"/>
</dbReference>
<dbReference type="NCBIfam" id="TIGR03777">
    <property type="entry name" value="RPE4"/>
    <property type="match status" value="1"/>
</dbReference>
<dbReference type="NCBIfam" id="TIGR00194">
    <property type="entry name" value="uvrC"/>
    <property type="match status" value="1"/>
</dbReference>
<dbReference type="PANTHER" id="PTHR30562:SF1">
    <property type="entry name" value="UVRABC SYSTEM PROTEIN C"/>
    <property type="match status" value="1"/>
</dbReference>
<dbReference type="PANTHER" id="PTHR30562">
    <property type="entry name" value="UVRC/OXIDOREDUCTASE"/>
    <property type="match status" value="1"/>
</dbReference>
<dbReference type="Pfam" id="PF01541">
    <property type="entry name" value="GIY-YIG"/>
    <property type="match status" value="1"/>
</dbReference>
<dbReference type="Pfam" id="PF14520">
    <property type="entry name" value="HHH_5"/>
    <property type="match status" value="1"/>
</dbReference>
<dbReference type="Pfam" id="PF02151">
    <property type="entry name" value="UVR"/>
    <property type="match status" value="1"/>
</dbReference>
<dbReference type="Pfam" id="PF22920">
    <property type="entry name" value="UvrC_RNaseH"/>
    <property type="match status" value="1"/>
</dbReference>
<dbReference type="Pfam" id="PF08459">
    <property type="entry name" value="UvrC_RNaseH_dom"/>
    <property type="match status" value="2"/>
</dbReference>
<dbReference type="SMART" id="SM00465">
    <property type="entry name" value="GIYc"/>
    <property type="match status" value="1"/>
</dbReference>
<dbReference type="SMART" id="SM00278">
    <property type="entry name" value="HhH1"/>
    <property type="match status" value="2"/>
</dbReference>
<dbReference type="SUPFAM" id="SSF46600">
    <property type="entry name" value="C-terminal UvrC-binding domain of UvrB"/>
    <property type="match status" value="1"/>
</dbReference>
<dbReference type="SUPFAM" id="SSF82771">
    <property type="entry name" value="GIY-YIG endonuclease"/>
    <property type="match status" value="1"/>
</dbReference>
<dbReference type="SUPFAM" id="SSF47781">
    <property type="entry name" value="RuvA domain 2-like"/>
    <property type="match status" value="1"/>
</dbReference>
<dbReference type="PROSITE" id="PS50164">
    <property type="entry name" value="GIY_YIG"/>
    <property type="match status" value="1"/>
</dbReference>
<dbReference type="PROSITE" id="PS50151">
    <property type="entry name" value="UVR"/>
    <property type="match status" value="1"/>
</dbReference>
<dbReference type="PROSITE" id="PS50165">
    <property type="entry name" value="UVRC"/>
    <property type="match status" value="1"/>
</dbReference>
<evidence type="ECO:0000255" key="1">
    <source>
        <dbReference type="HAMAP-Rule" id="MF_00203"/>
    </source>
</evidence>
<feature type="chain" id="PRO_0000264941" description="UvrABC system protein C">
    <location>
        <begin position="1"/>
        <end position="635"/>
    </location>
</feature>
<feature type="domain" description="GIY-YIG" evidence="1">
    <location>
        <begin position="20"/>
        <end position="97"/>
    </location>
</feature>
<feature type="domain" description="UVR" evidence="1">
    <location>
        <begin position="207"/>
        <end position="242"/>
    </location>
</feature>